<keyword id="KW-0025">Alternative splicing</keyword>
<keyword id="KW-1015">Disulfide bond</keyword>
<keyword id="KW-1032">Host cell membrane</keyword>
<keyword id="KW-1043">Host membrane</keyword>
<keyword id="KW-0945">Host-virus interaction</keyword>
<keyword id="KW-0375">Hydrogen ion transport</keyword>
<keyword id="KW-1083">Inhibition of host autophagy by virus</keyword>
<keyword id="KW-0407">Ion channel</keyword>
<keyword id="KW-0406">Ion transport</keyword>
<keyword id="KW-0449">Lipoprotein</keyword>
<keyword id="KW-0472">Membrane</keyword>
<keyword id="KW-0564">Palmitate</keyword>
<keyword id="KW-0597">Phosphoprotein</keyword>
<keyword id="KW-0735">Signal-anchor</keyword>
<keyword id="KW-0812">Transmembrane</keyword>
<keyword id="KW-1133">Transmembrane helix</keyword>
<keyword id="KW-0813">Transport</keyword>
<keyword id="KW-1182">Viral ion channel</keyword>
<keyword id="KW-0946">Virion</keyword>
<dbReference type="EMBL" id="AY651420">
    <property type="protein sequence ID" value="AAT70592.1"/>
    <property type="molecule type" value="Genomic_RNA"/>
</dbReference>
<dbReference type="SMR" id="Q6DPQ1"/>
<dbReference type="GO" id="GO:0020002">
    <property type="term" value="C:host cell plasma membrane"/>
    <property type="evidence" value="ECO:0007669"/>
    <property type="project" value="UniProtKB-SubCell"/>
</dbReference>
<dbReference type="GO" id="GO:0016020">
    <property type="term" value="C:membrane"/>
    <property type="evidence" value="ECO:0007669"/>
    <property type="project" value="UniProtKB-UniRule"/>
</dbReference>
<dbReference type="GO" id="GO:0055036">
    <property type="term" value="C:virion membrane"/>
    <property type="evidence" value="ECO:0007669"/>
    <property type="project" value="UniProtKB-SubCell"/>
</dbReference>
<dbReference type="GO" id="GO:0005216">
    <property type="term" value="F:monoatomic ion channel activity"/>
    <property type="evidence" value="ECO:0007669"/>
    <property type="project" value="UniProtKB-UniRule"/>
</dbReference>
<dbReference type="GO" id="GO:0015078">
    <property type="term" value="F:proton transmembrane transporter activity"/>
    <property type="evidence" value="ECO:0007669"/>
    <property type="project" value="UniProtKB-UniRule"/>
</dbReference>
<dbReference type="GO" id="GO:0051259">
    <property type="term" value="P:protein complex oligomerization"/>
    <property type="evidence" value="ECO:0007669"/>
    <property type="project" value="UniProtKB-UniRule"/>
</dbReference>
<dbReference type="GO" id="GO:0044694">
    <property type="term" value="P:symbiont genome entry into host cell via pore formation in plasma membrane"/>
    <property type="evidence" value="ECO:0007669"/>
    <property type="project" value="UniProtKB-UniRule"/>
</dbReference>
<dbReference type="GO" id="GO:0140321">
    <property type="term" value="P:symbiont-mediated suppression of host autophagy"/>
    <property type="evidence" value="ECO:0007669"/>
    <property type="project" value="UniProtKB-KW"/>
</dbReference>
<dbReference type="Gene3D" id="6.10.250.1640">
    <property type="match status" value="1"/>
</dbReference>
<dbReference type="HAMAP" id="MF_04069">
    <property type="entry name" value="INFV_M2"/>
    <property type="match status" value="1"/>
</dbReference>
<dbReference type="InterPro" id="IPR002089">
    <property type="entry name" value="Flu_M2"/>
</dbReference>
<dbReference type="Pfam" id="PF00599">
    <property type="entry name" value="Flu_M2"/>
    <property type="match status" value="1"/>
</dbReference>
<organismHost>
    <name type="scientific">Aves</name>
    <dbReference type="NCBI Taxonomy" id="8782"/>
</organismHost>
<organismHost>
    <name type="scientific">Felis catus</name>
    <name type="common">Cat</name>
    <name type="synonym">Felis silvestris catus</name>
    <dbReference type="NCBI Taxonomy" id="9685"/>
</organismHost>
<organismHost>
    <name type="scientific">Homo sapiens</name>
    <name type="common">Human</name>
    <dbReference type="NCBI Taxonomy" id="9606"/>
</organismHost>
<organismHost>
    <name type="scientific">Panthera pardus</name>
    <name type="common">Leopard</name>
    <name type="synonym">Felis pardus</name>
    <dbReference type="NCBI Taxonomy" id="9691"/>
</organismHost>
<organismHost>
    <name type="scientific">Panthera tigris</name>
    <name type="common">Tiger</name>
    <dbReference type="NCBI Taxonomy" id="9694"/>
</organismHost>
<organismHost>
    <name type="scientific">Sus scrofa</name>
    <name type="common">Pig</name>
    <dbReference type="NCBI Taxonomy" id="9823"/>
</organismHost>
<sequence>MSLLTEVETPTRNEWECRCSDSSDPLVVAASIIGILHLILWILDRLFFKCIYRRLKYGLKRGPSTAGVPESMREEYRQEQQSAVDVDDGHFVNIELE</sequence>
<name>M2_I03A1</name>
<comment type="function">
    <text evidence="1">Forms a proton-selective ion channel that is necessary for the efficient release of the viral genome during virus entry. After attaching to the cell surface, the virion enters the cell by endocytosis. Acidification of the endosome triggers M2 ion channel activity. The influx of protons into virion interior is believed to disrupt interactions between the viral ribonucleoprotein (RNP), matrix protein 1 (M1), and lipid bilayers, thereby freeing the viral genome from interaction with viral proteins and enabling RNA segments to migrate to the host cell nucleus, where influenza virus RNA transcription and replication occur. Also plays a role in viral proteins secretory pathway. Elevates the intravesicular pH of normally acidic compartments, such as trans-Golgi network, preventing newly formed hemagglutinin from premature switching to the fusion-active conformation.</text>
</comment>
<comment type="activity regulation">
    <text>The M2 protein from most influenza A strains is inhibited by amantadine and rimantadine, resulting in viral uncoating incapacity. Emergence of amantadine-resistant variants is usually rapid.</text>
</comment>
<comment type="subunit">
    <text evidence="1">Homotetramer; composed of two disulfide-linked dimers held together by non-covalent interactions. May interact with matrix protein 1.</text>
</comment>
<comment type="subcellular location">
    <subcellularLocation>
        <location evidence="1">Virion membrane</location>
    </subcellularLocation>
    <subcellularLocation>
        <location evidence="1">Host apical cell membrane</location>
        <topology evidence="1">Single-pass type III membrane protein</topology>
    </subcellularLocation>
    <text evidence="1">Abundantly expressed at the apical plasma membrane in infected polarized epithelial cells, in close proximity to budding and assembled virions. Minor component of virions (only 16-20 molecules/virion).</text>
</comment>
<comment type="alternative products">
    <event type="alternative splicing"/>
    <isoform>
        <id>Q6DPQ1-1</id>
        <name>M2</name>
        <sequence type="displayed"/>
    </isoform>
    <isoform>
        <id>Q6DPQ0-1</id>
        <name>M1</name>
        <sequence type="external"/>
    </isoform>
    <text>Only the first 9 residues are shared by the 2 isoforms.</text>
</comment>
<comment type="domain">
    <text evidence="1">Cytoplasmic tail plays an important role in virion assembly and morphogenesis.</text>
</comment>
<comment type="miscellaneous">
    <text evidence="1">When the channel is activated, one or more imidazole moieties of His-37 probably become bi-protonated.</text>
</comment>
<comment type="similarity">
    <text evidence="1">Belongs to the influenza viruses matrix protein M2 family.</text>
</comment>
<feature type="chain" id="PRO_0000311634" description="Matrix protein 2">
    <location>
        <begin position="1"/>
        <end position="97"/>
    </location>
</feature>
<feature type="topological domain" description="Virion surface" evidence="1">
    <location>
        <begin position="1"/>
        <end position="22"/>
    </location>
</feature>
<feature type="transmembrane region" description="Helical; Signal-anchor for type III membrane protein" evidence="1">
    <location>
        <begin position="23"/>
        <end position="43"/>
    </location>
</feature>
<feature type="topological domain" description="Intravirion" evidence="1">
    <location>
        <begin position="44"/>
        <end position="97"/>
    </location>
</feature>
<feature type="region of interest" description="Disordered" evidence="2">
    <location>
        <begin position="62"/>
        <end position="83"/>
    </location>
</feature>
<feature type="site" description="Essential for channel activity, possibly by being protonated during channel activation, and by forming the channel gate and the selective filter" evidence="1">
    <location>
        <position position="37"/>
    </location>
</feature>
<feature type="site" description="Seems to be involved in pH gating" evidence="1">
    <location>
        <position position="41"/>
    </location>
</feature>
<feature type="modified residue" description="Phosphoserine; by host" evidence="1">
    <location>
        <position position="64"/>
    </location>
</feature>
<feature type="modified residue" description="Phosphoserine; by host" evidence="1">
    <location>
        <position position="82"/>
    </location>
</feature>
<feature type="lipid moiety-binding region" description="S-palmitoyl cysteine; by host" evidence="1">
    <location>
        <position position="50"/>
    </location>
</feature>
<feature type="disulfide bond" description="Interchain (with C-17)" evidence="1">
    <location>
        <position position="17"/>
    </location>
</feature>
<feature type="disulfide bond" description="Interchain (with C-19)" evidence="1">
    <location>
        <position position="19"/>
    </location>
</feature>
<gene>
    <name evidence="1" type="primary">M</name>
</gene>
<organism>
    <name type="scientific">Influenza A virus (strain A/Chicken/Shantou/4231/2003 H5N1 genotype V)</name>
    <dbReference type="NCBI Taxonomy" id="284184"/>
    <lineage>
        <taxon>Viruses</taxon>
        <taxon>Riboviria</taxon>
        <taxon>Orthornavirae</taxon>
        <taxon>Negarnaviricota</taxon>
        <taxon>Polyploviricotina</taxon>
        <taxon>Insthoviricetes</taxon>
        <taxon>Articulavirales</taxon>
        <taxon>Orthomyxoviridae</taxon>
        <taxon>Alphainfluenzavirus</taxon>
        <taxon>Alphainfluenzavirus influenzae</taxon>
        <taxon>Influenza A virus</taxon>
    </lineage>
</organism>
<proteinExistence type="inferred from homology"/>
<protein>
    <recommendedName>
        <fullName evidence="1">Matrix protein 2</fullName>
    </recommendedName>
    <alternativeName>
        <fullName evidence="1">Proton channel protein M2</fullName>
    </alternativeName>
</protein>
<evidence type="ECO:0000255" key="1">
    <source>
        <dbReference type="HAMAP-Rule" id="MF_04069"/>
    </source>
</evidence>
<evidence type="ECO:0000256" key="2">
    <source>
        <dbReference type="SAM" id="MobiDB-lite"/>
    </source>
</evidence>
<accession>Q6DPQ1</accession>
<reference key="1">
    <citation type="journal article" date="2004" name="Nature">
        <title>Genesis of a highly pathogenic and potentially pandemic H5N1 influenza virus in eastern Asia.</title>
        <authorList>
            <person name="Li K.S."/>
            <person name="Guan Y."/>
            <person name="Wang J."/>
            <person name="Smith G.J.D."/>
            <person name="Xu K.M."/>
            <person name="Duan L."/>
            <person name="Rahardjo A.P."/>
            <person name="Puthavathana P."/>
            <person name="Buranathai C."/>
            <person name="Nguyen T.D."/>
            <person name="Estoepangestie A.T.S."/>
            <person name="Chaisingh A."/>
            <person name="Auewarakul P."/>
            <person name="Long H.T."/>
            <person name="Hanh N.T.H."/>
            <person name="Webby R.J."/>
            <person name="Poon L.L.M."/>
            <person name="Chen H."/>
            <person name="Shortridge K.F."/>
            <person name="Yuen K.Y."/>
            <person name="Webster R.G."/>
            <person name="Peiris J.S.M."/>
        </authorList>
    </citation>
    <scope>NUCLEOTIDE SEQUENCE [GENOMIC RNA]</scope>
</reference>